<dbReference type="EC" id="7.1.2.2" evidence="1"/>
<dbReference type="EMBL" id="CP001164">
    <property type="protein sequence ID" value="ACI39451.1"/>
    <property type="molecule type" value="Genomic_DNA"/>
</dbReference>
<dbReference type="RefSeq" id="WP_001176745.1">
    <property type="nucleotide sequence ID" value="NC_011353.1"/>
</dbReference>
<dbReference type="SMR" id="B5YXD8"/>
<dbReference type="GeneID" id="93778233"/>
<dbReference type="KEGG" id="ecf:ECH74115_5170"/>
<dbReference type="HOGENOM" id="CLU_010091_2_1_6"/>
<dbReference type="GO" id="GO:0005886">
    <property type="term" value="C:plasma membrane"/>
    <property type="evidence" value="ECO:0007669"/>
    <property type="project" value="UniProtKB-SubCell"/>
</dbReference>
<dbReference type="GO" id="GO:0045259">
    <property type="term" value="C:proton-transporting ATP synthase complex"/>
    <property type="evidence" value="ECO:0007669"/>
    <property type="project" value="UniProtKB-KW"/>
</dbReference>
<dbReference type="GO" id="GO:0043531">
    <property type="term" value="F:ADP binding"/>
    <property type="evidence" value="ECO:0007669"/>
    <property type="project" value="TreeGrafter"/>
</dbReference>
<dbReference type="GO" id="GO:0005524">
    <property type="term" value="F:ATP binding"/>
    <property type="evidence" value="ECO:0007669"/>
    <property type="project" value="UniProtKB-UniRule"/>
</dbReference>
<dbReference type="GO" id="GO:0046933">
    <property type="term" value="F:proton-transporting ATP synthase activity, rotational mechanism"/>
    <property type="evidence" value="ECO:0007669"/>
    <property type="project" value="UniProtKB-UniRule"/>
</dbReference>
<dbReference type="CDD" id="cd18113">
    <property type="entry name" value="ATP-synt_F1_alpha_C"/>
    <property type="match status" value="1"/>
</dbReference>
<dbReference type="CDD" id="cd18116">
    <property type="entry name" value="ATP-synt_F1_alpha_N"/>
    <property type="match status" value="1"/>
</dbReference>
<dbReference type="CDD" id="cd01132">
    <property type="entry name" value="F1-ATPase_alpha_CD"/>
    <property type="match status" value="1"/>
</dbReference>
<dbReference type="FunFam" id="1.20.150.20:FF:000001">
    <property type="entry name" value="ATP synthase subunit alpha"/>
    <property type="match status" value="1"/>
</dbReference>
<dbReference type="FunFam" id="2.40.30.20:FF:000001">
    <property type="entry name" value="ATP synthase subunit alpha"/>
    <property type="match status" value="1"/>
</dbReference>
<dbReference type="FunFam" id="3.40.50.300:FF:000002">
    <property type="entry name" value="ATP synthase subunit alpha"/>
    <property type="match status" value="1"/>
</dbReference>
<dbReference type="Gene3D" id="2.40.30.20">
    <property type="match status" value="1"/>
</dbReference>
<dbReference type="Gene3D" id="1.20.150.20">
    <property type="entry name" value="ATP synthase alpha/beta chain, C-terminal domain"/>
    <property type="match status" value="1"/>
</dbReference>
<dbReference type="Gene3D" id="3.40.50.300">
    <property type="entry name" value="P-loop containing nucleotide triphosphate hydrolases"/>
    <property type="match status" value="1"/>
</dbReference>
<dbReference type="HAMAP" id="MF_01346">
    <property type="entry name" value="ATP_synth_alpha_bact"/>
    <property type="match status" value="1"/>
</dbReference>
<dbReference type="InterPro" id="IPR023366">
    <property type="entry name" value="ATP_synth_asu-like_sf"/>
</dbReference>
<dbReference type="InterPro" id="IPR000793">
    <property type="entry name" value="ATP_synth_asu_C"/>
</dbReference>
<dbReference type="InterPro" id="IPR038376">
    <property type="entry name" value="ATP_synth_asu_C_sf"/>
</dbReference>
<dbReference type="InterPro" id="IPR033732">
    <property type="entry name" value="ATP_synth_F1_a_nt-bd_dom"/>
</dbReference>
<dbReference type="InterPro" id="IPR005294">
    <property type="entry name" value="ATP_synth_F1_asu"/>
</dbReference>
<dbReference type="InterPro" id="IPR020003">
    <property type="entry name" value="ATPase_a/bsu_AS"/>
</dbReference>
<dbReference type="InterPro" id="IPR004100">
    <property type="entry name" value="ATPase_F1/V1/A1_a/bsu_N"/>
</dbReference>
<dbReference type="InterPro" id="IPR036121">
    <property type="entry name" value="ATPase_F1/V1/A1_a/bsu_N_sf"/>
</dbReference>
<dbReference type="InterPro" id="IPR000194">
    <property type="entry name" value="ATPase_F1/V1/A1_a/bsu_nucl-bd"/>
</dbReference>
<dbReference type="InterPro" id="IPR027417">
    <property type="entry name" value="P-loop_NTPase"/>
</dbReference>
<dbReference type="NCBIfam" id="TIGR00962">
    <property type="entry name" value="atpA"/>
    <property type="match status" value="1"/>
</dbReference>
<dbReference type="NCBIfam" id="NF009884">
    <property type="entry name" value="PRK13343.1"/>
    <property type="match status" value="1"/>
</dbReference>
<dbReference type="PANTHER" id="PTHR48082">
    <property type="entry name" value="ATP SYNTHASE SUBUNIT ALPHA, MITOCHONDRIAL"/>
    <property type="match status" value="1"/>
</dbReference>
<dbReference type="PANTHER" id="PTHR48082:SF2">
    <property type="entry name" value="ATP SYNTHASE SUBUNIT ALPHA, MITOCHONDRIAL"/>
    <property type="match status" value="1"/>
</dbReference>
<dbReference type="Pfam" id="PF00006">
    <property type="entry name" value="ATP-synt_ab"/>
    <property type="match status" value="1"/>
</dbReference>
<dbReference type="Pfam" id="PF00306">
    <property type="entry name" value="ATP-synt_ab_C"/>
    <property type="match status" value="1"/>
</dbReference>
<dbReference type="Pfam" id="PF02874">
    <property type="entry name" value="ATP-synt_ab_N"/>
    <property type="match status" value="1"/>
</dbReference>
<dbReference type="SUPFAM" id="SSF47917">
    <property type="entry name" value="C-terminal domain of alpha and beta subunits of F1 ATP synthase"/>
    <property type="match status" value="1"/>
</dbReference>
<dbReference type="SUPFAM" id="SSF50615">
    <property type="entry name" value="N-terminal domain of alpha and beta subunits of F1 ATP synthase"/>
    <property type="match status" value="1"/>
</dbReference>
<dbReference type="SUPFAM" id="SSF52540">
    <property type="entry name" value="P-loop containing nucleoside triphosphate hydrolases"/>
    <property type="match status" value="1"/>
</dbReference>
<dbReference type="PROSITE" id="PS00152">
    <property type="entry name" value="ATPASE_ALPHA_BETA"/>
    <property type="match status" value="1"/>
</dbReference>
<sequence>MQLNSTEISELIKQRIAQFNVVSEAHNEGTIVSVSDGVIRIHGLADCMQGEMISLPGNRYAIALNLERDSVGAVVMGPYADLAEGMKVKCTGRILEVPVGRGLLGRVVNTLGAPIDGKGPLDHDGFSAVEAIAPGVIERQSVDQPVQTGYKAVDSMIPIGRGQRELIIGDRQTGKTALAIDAIINQRDSGIKCIYVAIGQKASTISNVVRKLEEHGALANTIVVVATASESAALQYLAPYAGCAMGEYFRDRGEDALIIYDDLSKQAVAYRQISLLLRRPPGREAFPGDVFYLHSRLLERAARVNAEYVEAFTKGEVKGKTGSLTALPIIETQAGDVSAFVPTNVISITDGQIFLETNLFNAGIRPAVNPGISVSRVGGAAQTKIMKKLSGGIRTALAQYRELAAFSQFASDLDDATRKQLDHGQKVTELLKQKQYAPMSVAQQSLVLFAAERGYLADVELSKIGSFEAALLAYVDRDHAPLMQEINQTGGYNDEIEGKLKGILDSFKATQSW</sequence>
<reference key="1">
    <citation type="journal article" date="2011" name="Proc. Natl. Acad. Sci. U.S.A.">
        <title>Genomic anatomy of Escherichia coli O157:H7 outbreaks.</title>
        <authorList>
            <person name="Eppinger M."/>
            <person name="Mammel M.K."/>
            <person name="Leclerc J.E."/>
            <person name="Ravel J."/>
            <person name="Cebula T.A."/>
        </authorList>
    </citation>
    <scope>NUCLEOTIDE SEQUENCE [LARGE SCALE GENOMIC DNA]</scope>
    <source>
        <strain>EC4115 / EHEC</strain>
    </source>
</reference>
<evidence type="ECO:0000255" key="1">
    <source>
        <dbReference type="HAMAP-Rule" id="MF_01346"/>
    </source>
</evidence>
<proteinExistence type="inferred from homology"/>
<keyword id="KW-0066">ATP synthesis</keyword>
<keyword id="KW-0067">ATP-binding</keyword>
<keyword id="KW-0997">Cell inner membrane</keyword>
<keyword id="KW-1003">Cell membrane</keyword>
<keyword id="KW-0139">CF(1)</keyword>
<keyword id="KW-0375">Hydrogen ion transport</keyword>
<keyword id="KW-0406">Ion transport</keyword>
<keyword id="KW-0472">Membrane</keyword>
<keyword id="KW-0547">Nucleotide-binding</keyword>
<keyword id="KW-1278">Translocase</keyword>
<keyword id="KW-0813">Transport</keyword>
<name>ATPA_ECO5E</name>
<accession>B5YXD8</accession>
<protein>
    <recommendedName>
        <fullName evidence="1">ATP synthase subunit alpha</fullName>
        <ecNumber evidence="1">7.1.2.2</ecNumber>
    </recommendedName>
    <alternativeName>
        <fullName evidence="1">ATP synthase F1 sector subunit alpha</fullName>
    </alternativeName>
    <alternativeName>
        <fullName evidence="1">F-ATPase subunit alpha</fullName>
    </alternativeName>
</protein>
<organism>
    <name type="scientific">Escherichia coli O157:H7 (strain EC4115 / EHEC)</name>
    <dbReference type="NCBI Taxonomy" id="444450"/>
    <lineage>
        <taxon>Bacteria</taxon>
        <taxon>Pseudomonadati</taxon>
        <taxon>Pseudomonadota</taxon>
        <taxon>Gammaproteobacteria</taxon>
        <taxon>Enterobacterales</taxon>
        <taxon>Enterobacteriaceae</taxon>
        <taxon>Escherichia</taxon>
    </lineage>
</organism>
<gene>
    <name evidence="1" type="primary">atpA</name>
    <name type="ordered locus">ECH74115_5170</name>
</gene>
<comment type="function">
    <text evidence="1">Produces ATP from ADP in the presence of a proton gradient across the membrane. The alpha chain is a regulatory subunit.</text>
</comment>
<comment type="catalytic activity">
    <reaction evidence="1">
        <text>ATP + H2O + 4 H(+)(in) = ADP + phosphate + 5 H(+)(out)</text>
        <dbReference type="Rhea" id="RHEA:57720"/>
        <dbReference type="ChEBI" id="CHEBI:15377"/>
        <dbReference type="ChEBI" id="CHEBI:15378"/>
        <dbReference type="ChEBI" id="CHEBI:30616"/>
        <dbReference type="ChEBI" id="CHEBI:43474"/>
        <dbReference type="ChEBI" id="CHEBI:456216"/>
        <dbReference type="EC" id="7.1.2.2"/>
    </reaction>
</comment>
<comment type="subunit">
    <text evidence="1">F-type ATPases have 2 components, CF(1) - the catalytic core - and CF(0) - the membrane proton channel. CF(1) has five subunits: alpha(3), beta(3), gamma(1), delta(1), epsilon(1). CF(0) has three main subunits: a(1), b(2) and c(9-12). The alpha and beta chains form an alternating ring which encloses part of the gamma chain. CF(1) is attached to CF(0) by a central stalk formed by the gamma and epsilon chains, while a peripheral stalk is formed by the delta and b chains.</text>
</comment>
<comment type="subcellular location">
    <subcellularLocation>
        <location evidence="1">Cell inner membrane</location>
        <topology evidence="1">Peripheral membrane protein</topology>
    </subcellularLocation>
</comment>
<comment type="similarity">
    <text evidence="1">Belongs to the ATPase alpha/beta chains family.</text>
</comment>
<feature type="chain" id="PRO_1000143373" description="ATP synthase subunit alpha">
    <location>
        <begin position="1"/>
        <end position="513"/>
    </location>
</feature>
<feature type="binding site" evidence="1">
    <location>
        <begin position="169"/>
        <end position="176"/>
    </location>
    <ligand>
        <name>ATP</name>
        <dbReference type="ChEBI" id="CHEBI:30616"/>
    </ligand>
</feature>
<feature type="site" description="Required for activity" evidence="1">
    <location>
        <position position="373"/>
    </location>
</feature>